<keyword id="KW-0030">Aminoacyl-tRNA synthetase</keyword>
<keyword id="KW-0067">ATP-binding</keyword>
<keyword id="KW-0963">Cytoplasm</keyword>
<keyword id="KW-0436">Ligase</keyword>
<keyword id="KW-0479">Metal-binding</keyword>
<keyword id="KW-0547">Nucleotide-binding</keyword>
<keyword id="KW-0648">Protein biosynthesis</keyword>
<keyword id="KW-1185">Reference proteome</keyword>
<keyword id="KW-0694">RNA-binding</keyword>
<keyword id="KW-0820">tRNA-binding</keyword>
<keyword id="KW-0862">Zinc</keyword>
<protein>
    <recommendedName>
        <fullName evidence="1">Threonine--tRNA ligase</fullName>
        <ecNumber evidence="1">6.1.1.3</ecNumber>
    </recommendedName>
    <alternativeName>
        <fullName evidence="1">Threonyl-tRNA synthetase</fullName>
        <shortName evidence="1">ThrRS</shortName>
    </alternativeName>
</protein>
<evidence type="ECO:0000255" key="1">
    <source>
        <dbReference type="HAMAP-Rule" id="MF_00184"/>
    </source>
</evidence>
<feature type="chain" id="PRO_1000020436" description="Threonine--tRNA ligase">
    <location>
        <begin position="1"/>
        <end position="619"/>
    </location>
</feature>
<feature type="region of interest" description="Editing domain" evidence="1">
    <location>
        <begin position="1"/>
        <end position="143"/>
    </location>
</feature>
<feature type="region of interest" description="Catalytic" evidence="1">
    <location>
        <begin position="201"/>
        <end position="500"/>
    </location>
</feature>
<feature type="binding site" evidence="1">
    <location>
        <position position="293"/>
    </location>
    <ligand>
        <name>Zn(2+)</name>
        <dbReference type="ChEBI" id="CHEBI:29105"/>
    </ligand>
</feature>
<feature type="binding site" evidence="1">
    <location>
        <position position="345"/>
    </location>
    <ligand>
        <name>Zn(2+)</name>
        <dbReference type="ChEBI" id="CHEBI:29105"/>
    </ligand>
</feature>
<feature type="binding site" evidence="1">
    <location>
        <position position="469"/>
    </location>
    <ligand>
        <name>Zn(2+)</name>
        <dbReference type="ChEBI" id="CHEBI:29105"/>
    </ligand>
</feature>
<dbReference type="EC" id="6.1.1.3" evidence="1"/>
<dbReference type="EMBL" id="CP000477">
    <property type="protein sequence ID" value="ABK14958.1"/>
    <property type="molecule type" value="Genomic_DNA"/>
</dbReference>
<dbReference type="RefSeq" id="WP_011696351.1">
    <property type="nucleotide sequence ID" value="NC_008553.1"/>
</dbReference>
<dbReference type="SMR" id="A0B8D4"/>
<dbReference type="STRING" id="349307.Mthe_1176"/>
<dbReference type="GeneID" id="4462641"/>
<dbReference type="KEGG" id="mtp:Mthe_1176"/>
<dbReference type="HOGENOM" id="CLU_029833_0_0_2"/>
<dbReference type="OrthoDB" id="372136at2157"/>
<dbReference type="Proteomes" id="UP000000674">
    <property type="component" value="Chromosome"/>
</dbReference>
<dbReference type="GO" id="GO:0005737">
    <property type="term" value="C:cytoplasm"/>
    <property type="evidence" value="ECO:0007669"/>
    <property type="project" value="UniProtKB-SubCell"/>
</dbReference>
<dbReference type="GO" id="GO:0005524">
    <property type="term" value="F:ATP binding"/>
    <property type="evidence" value="ECO:0007669"/>
    <property type="project" value="UniProtKB-UniRule"/>
</dbReference>
<dbReference type="GO" id="GO:0004829">
    <property type="term" value="F:threonine-tRNA ligase activity"/>
    <property type="evidence" value="ECO:0007669"/>
    <property type="project" value="UniProtKB-UniRule"/>
</dbReference>
<dbReference type="GO" id="GO:0000049">
    <property type="term" value="F:tRNA binding"/>
    <property type="evidence" value="ECO:0007669"/>
    <property type="project" value="UniProtKB-KW"/>
</dbReference>
<dbReference type="GO" id="GO:0008270">
    <property type="term" value="F:zinc ion binding"/>
    <property type="evidence" value="ECO:0007669"/>
    <property type="project" value="InterPro"/>
</dbReference>
<dbReference type="GO" id="GO:0006435">
    <property type="term" value="P:threonyl-tRNA aminoacylation"/>
    <property type="evidence" value="ECO:0007669"/>
    <property type="project" value="UniProtKB-UniRule"/>
</dbReference>
<dbReference type="CDD" id="cd00860">
    <property type="entry name" value="ThrRS_anticodon"/>
    <property type="match status" value="1"/>
</dbReference>
<dbReference type="FunFam" id="3.30.930.10:FF:000076">
    <property type="entry name" value="Threonine--tRNA ligase"/>
    <property type="match status" value="1"/>
</dbReference>
<dbReference type="FunFam" id="3.40.50.800:FF:000001">
    <property type="entry name" value="Threonine--tRNA ligase"/>
    <property type="match status" value="1"/>
</dbReference>
<dbReference type="FunFam" id="3.50.80.10:FF:000004">
    <property type="entry name" value="Threonine--tRNA ligase"/>
    <property type="match status" value="1"/>
</dbReference>
<dbReference type="Gene3D" id="3.40.50.800">
    <property type="entry name" value="Anticodon-binding domain"/>
    <property type="match status" value="1"/>
</dbReference>
<dbReference type="Gene3D" id="3.30.930.10">
    <property type="entry name" value="Bira Bifunctional Protein, Domain 2"/>
    <property type="match status" value="1"/>
</dbReference>
<dbReference type="Gene3D" id="3.50.80.10">
    <property type="entry name" value="D-tyrosyl-tRNA(Tyr) deacylase"/>
    <property type="match status" value="1"/>
</dbReference>
<dbReference type="HAMAP" id="MF_00184">
    <property type="entry name" value="Thr_tRNA_synth"/>
    <property type="match status" value="1"/>
</dbReference>
<dbReference type="InterPro" id="IPR002314">
    <property type="entry name" value="aa-tRNA-synt_IIb"/>
</dbReference>
<dbReference type="InterPro" id="IPR006195">
    <property type="entry name" value="aa-tRNA-synth_II"/>
</dbReference>
<dbReference type="InterPro" id="IPR045864">
    <property type="entry name" value="aa-tRNA-synth_II/BPL/LPL"/>
</dbReference>
<dbReference type="InterPro" id="IPR004154">
    <property type="entry name" value="Anticodon-bd"/>
</dbReference>
<dbReference type="InterPro" id="IPR036621">
    <property type="entry name" value="Anticodon-bd_dom_sf"/>
</dbReference>
<dbReference type="InterPro" id="IPR023509">
    <property type="entry name" value="DTD-like_sf"/>
</dbReference>
<dbReference type="InterPro" id="IPR002320">
    <property type="entry name" value="Thr-tRNA-ligase_IIa"/>
</dbReference>
<dbReference type="InterPro" id="IPR015011">
    <property type="entry name" value="Threonyl-tRNA_syn_edit_dom_arc"/>
</dbReference>
<dbReference type="InterPro" id="IPR047246">
    <property type="entry name" value="ThrRS_anticodon"/>
</dbReference>
<dbReference type="NCBIfam" id="NF003068">
    <property type="entry name" value="PRK03991.1"/>
    <property type="match status" value="1"/>
</dbReference>
<dbReference type="NCBIfam" id="TIGR00418">
    <property type="entry name" value="thrS"/>
    <property type="match status" value="1"/>
</dbReference>
<dbReference type="PANTHER" id="PTHR11451:SF44">
    <property type="entry name" value="THREONINE--TRNA LIGASE, CHLOROPLASTIC_MITOCHONDRIAL 2"/>
    <property type="match status" value="1"/>
</dbReference>
<dbReference type="PANTHER" id="PTHR11451">
    <property type="entry name" value="THREONINE-TRNA LIGASE"/>
    <property type="match status" value="1"/>
</dbReference>
<dbReference type="Pfam" id="PF03129">
    <property type="entry name" value="HGTP_anticodon"/>
    <property type="match status" value="1"/>
</dbReference>
<dbReference type="Pfam" id="PF00587">
    <property type="entry name" value="tRNA-synt_2b"/>
    <property type="match status" value="1"/>
</dbReference>
<dbReference type="Pfam" id="PF08915">
    <property type="entry name" value="tRNA-Thr_ED"/>
    <property type="match status" value="1"/>
</dbReference>
<dbReference type="PRINTS" id="PR01047">
    <property type="entry name" value="TRNASYNTHTHR"/>
</dbReference>
<dbReference type="SUPFAM" id="SSF52954">
    <property type="entry name" value="Class II aaRS ABD-related"/>
    <property type="match status" value="1"/>
</dbReference>
<dbReference type="SUPFAM" id="SSF55681">
    <property type="entry name" value="Class II aaRS and biotin synthetases"/>
    <property type="match status" value="1"/>
</dbReference>
<dbReference type="PROSITE" id="PS50862">
    <property type="entry name" value="AA_TRNA_LIGASE_II"/>
    <property type="match status" value="1"/>
</dbReference>
<comment type="function">
    <text evidence="1">Catalyzes the attachment of threonine to tRNA(Thr) in a two-step reaction: L-threonine is first activated by ATP to form Thr-AMP and then transferred to the acceptor end of tRNA(Thr). Also edits incorrectly charged L-seryl-tRNA(Thr).</text>
</comment>
<comment type="catalytic activity">
    <reaction evidence="1">
        <text>tRNA(Thr) + L-threonine + ATP = L-threonyl-tRNA(Thr) + AMP + diphosphate + H(+)</text>
        <dbReference type="Rhea" id="RHEA:24624"/>
        <dbReference type="Rhea" id="RHEA-COMP:9670"/>
        <dbReference type="Rhea" id="RHEA-COMP:9704"/>
        <dbReference type="ChEBI" id="CHEBI:15378"/>
        <dbReference type="ChEBI" id="CHEBI:30616"/>
        <dbReference type="ChEBI" id="CHEBI:33019"/>
        <dbReference type="ChEBI" id="CHEBI:57926"/>
        <dbReference type="ChEBI" id="CHEBI:78442"/>
        <dbReference type="ChEBI" id="CHEBI:78534"/>
        <dbReference type="ChEBI" id="CHEBI:456215"/>
        <dbReference type="EC" id="6.1.1.3"/>
    </reaction>
</comment>
<comment type="cofactor">
    <cofactor evidence="1">
        <name>Zn(2+)</name>
        <dbReference type="ChEBI" id="CHEBI:29105"/>
    </cofactor>
    <text evidence="1">Binds 1 zinc ion per subunit.</text>
</comment>
<comment type="subunit">
    <text evidence="1">Homodimer.</text>
</comment>
<comment type="subcellular location">
    <subcellularLocation>
        <location evidence="1">Cytoplasm</location>
    </subcellularLocation>
</comment>
<comment type="domain">
    <text evidence="1">The N-terminal domain is an archaea-specific tRNA-editing domain that hydrolyzes incorrectly charged L-seryl-tRNA(Thr). Catalysis of tRNA editing is performed by the charged tRNA itself.</text>
</comment>
<comment type="similarity">
    <text evidence="1">Belongs to the class-II aminoacyl-tRNA synthetase family.</text>
</comment>
<proteinExistence type="inferred from homology"/>
<gene>
    <name evidence="1" type="primary">thrS</name>
    <name type="ordered locus">Mthe_1176</name>
</gene>
<accession>A0B8D4</accession>
<sequence>MQLLLIHSDFIEFEAKKPTKFAEEVPEEARSGRLDEALCAFIAVEKFDEDDPDAVVAQAAGEIEEVAKRVKAERIMLYPYAHLSSALSSPETAVRVLRDLESTLKSSFEVARAPFGWYKSFTIRCKGHPLSELSRSIRIGEGEVVSQALKSEAKAVSHWRIMKKGGEMVPPEEFDFRGHERLEKFVRYEIEKSRAVDRIPPHVELMRRLELVDYEPGSDPGNMRYYPKGRLVKSLLESYVTDRALEMGAMEVETPVMYDMDHPTLKKYLDRFPARQYAIEADKKHLFLRFAACFGQFLMGHDMTFSYRSLPLRMFELTRYSFRREQRGELVGLRRLRAFTMPDMHTFCGDMSSAMEEFRKQYEASISVLRDAGLDLKDYEVAIRFTKDFYENNKTFIEGLVDIVDKPVLIEMWDERFFYFVLKFEFNFVDALDKASALSTVQIDVENAERYDIGYVDAEGNRQRPIILHCSPSGAIERLMYALLEKQAMIAANGGLPMLPTWLSPTQVRIIPVAERHHARAMEVAEQLNFRVDVDDRDETVGKKIRDAGREWVPYVAVVGDEELSTGLLTVTVRSESTSNQKIKMSVEELRARLQSETAGRPWRRLPLPVRLSERPKFV</sequence>
<reference key="1">
    <citation type="submission" date="2006-10" db="EMBL/GenBank/DDBJ databases">
        <title>Complete sequence of Methanosaeta thermophila PT.</title>
        <authorList>
            <consortium name="US DOE Joint Genome Institute"/>
            <person name="Copeland A."/>
            <person name="Lucas S."/>
            <person name="Lapidus A."/>
            <person name="Barry K."/>
            <person name="Detter J.C."/>
            <person name="Glavina del Rio T."/>
            <person name="Hammon N."/>
            <person name="Israni S."/>
            <person name="Pitluck S."/>
            <person name="Chain P."/>
            <person name="Malfatti S."/>
            <person name="Shin M."/>
            <person name="Vergez L."/>
            <person name="Schmutz J."/>
            <person name="Larimer F."/>
            <person name="Land M."/>
            <person name="Hauser L."/>
            <person name="Kyrpides N."/>
            <person name="Kim E."/>
            <person name="Smith K.S."/>
            <person name="Ingram-Smith C."/>
            <person name="Richardson P."/>
        </authorList>
    </citation>
    <scope>NUCLEOTIDE SEQUENCE [LARGE SCALE GENOMIC DNA]</scope>
    <source>
        <strain>DSM 6194 / JCM 14653 / NBRC 101360 / PT</strain>
    </source>
</reference>
<organism>
    <name type="scientific">Methanothrix thermoacetophila (strain DSM 6194 / JCM 14653 / NBRC 101360 / PT)</name>
    <name type="common">Methanosaeta thermophila</name>
    <dbReference type="NCBI Taxonomy" id="349307"/>
    <lineage>
        <taxon>Archaea</taxon>
        <taxon>Methanobacteriati</taxon>
        <taxon>Methanobacteriota</taxon>
        <taxon>Stenosarchaea group</taxon>
        <taxon>Methanomicrobia</taxon>
        <taxon>Methanotrichales</taxon>
        <taxon>Methanotrichaceae</taxon>
        <taxon>Methanothrix</taxon>
    </lineage>
</organism>
<name>SYT_METTP</name>